<organism>
    <name type="scientific">Mycolicibacterium paratuberculosis (strain ATCC BAA-968 / K-10)</name>
    <name type="common">Mycobacterium paratuberculosis</name>
    <dbReference type="NCBI Taxonomy" id="262316"/>
    <lineage>
        <taxon>Bacteria</taxon>
        <taxon>Bacillati</taxon>
        <taxon>Actinomycetota</taxon>
        <taxon>Actinomycetes</taxon>
        <taxon>Mycobacteriales</taxon>
        <taxon>Mycobacteriaceae</taxon>
        <taxon>Mycobacterium</taxon>
        <taxon>Mycobacterium avium complex (MAC)</taxon>
    </lineage>
</organism>
<proteinExistence type="inferred from homology"/>
<gene>
    <name evidence="1" type="primary">tsaD</name>
    <name type="synonym">gcp</name>
    <name type="ordered locus">MAP_4263</name>
</gene>
<comment type="function">
    <text evidence="1">Required for the formation of a threonylcarbamoyl group on adenosine at position 37 (t(6)A37) in tRNAs that read codons beginning with adenine. Is involved in the transfer of the threonylcarbamoyl moiety of threonylcarbamoyl-AMP (TC-AMP) to the N6 group of A37, together with TsaE and TsaB. TsaD likely plays a direct catalytic role in this reaction.</text>
</comment>
<comment type="catalytic activity">
    <reaction evidence="1">
        <text>L-threonylcarbamoyladenylate + adenosine(37) in tRNA = N(6)-L-threonylcarbamoyladenosine(37) in tRNA + AMP + H(+)</text>
        <dbReference type="Rhea" id="RHEA:37059"/>
        <dbReference type="Rhea" id="RHEA-COMP:10162"/>
        <dbReference type="Rhea" id="RHEA-COMP:10163"/>
        <dbReference type="ChEBI" id="CHEBI:15378"/>
        <dbReference type="ChEBI" id="CHEBI:73682"/>
        <dbReference type="ChEBI" id="CHEBI:74411"/>
        <dbReference type="ChEBI" id="CHEBI:74418"/>
        <dbReference type="ChEBI" id="CHEBI:456215"/>
        <dbReference type="EC" id="2.3.1.234"/>
    </reaction>
</comment>
<comment type="cofactor">
    <cofactor evidence="1">
        <name>Fe(2+)</name>
        <dbReference type="ChEBI" id="CHEBI:29033"/>
    </cofactor>
    <text evidence="1">Binds 1 Fe(2+) ion per subunit.</text>
</comment>
<comment type="subcellular location">
    <subcellularLocation>
        <location evidence="1">Cytoplasm</location>
    </subcellularLocation>
</comment>
<comment type="similarity">
    <text evidence="1">Belongs to the KAE1 / TsaD family.</text>
</comment>
<name>TSAD_MYCPA</name>
<reference key="1">
    <citation type="journal article" date="2005" name="Proc. Natl. Acad. Sci. U.S.A.">
        <title>The complete genome sequence of Mycobacterium avium subspecies paratuberculosis.</title>
        <authorList>
            <person name="Li L."/>
            <person name="Bannantine J.P."/>
            <person name="Zhang Q."/>
            <person name="Amonsin A."/>
            <person name="May B.J."/>
            <person name="Alt D."/>
            <person name="Banerji N."/>
            <person name="Kanjilal S."/>
            <person name="Kapur V."/>
        </authorList>
    </citation>
    <scope>NUCLEOTIDE SEQUENCE [LARGE SCALE GENOMIC DNA]</scope>
    <source>
        <strain>ATCC BAA-968 / K-10</strain>
    </source>
</reference>
<protein>
    <recommendedName>
        <fullName evidence="1">tRNA N6-adenosine threonylcarbamoyltransferase</fullName>
        <ecNumber evidence="1">2.3.1.234</ecNumber>
    </recommendedName>
    <alternativeName>
        <fullName evidence="1">N6-L-threonylcarbamoyladenine synthase</fullName>
        <shortName evidence="1">t(6)A synthase</shortName>
    </alternativeName>
    <alternativeName>
        <fullName evidence="1">t(6)A37 threonylcarbamoyladenosine biosynthesis protein TsaD</fullName>
    </alternativeName>
    <alternativeName>
        <fullName evidence="1">tRNA threonylcarbamoyladenosine biosynthesis protein TsaD</fullName>
    </alternativeName>
</protein>
<accession>Q73S13</accession>
<feature type="chain" id="PRO_0000303430" description="tRNA N6-adenosine threonylcarbamoyltransferase">
    <location>
        <begin position="1"/>
        <end position="341"/>
    </location>
</feature>
<feature type="binding site" evidence="1">
    <location>
        <position position="114"/>
    </location>
    <ligand>
        <name>Fe cation</name>
        <dbReference type="ChEBI" id="CHEBI:24875"/>
    </ligand>
</feature>
<feature type="binding site" evidence="1">
    <location>
        <position position="118"/>
    </location>
    <ligand>
        <name>Fe cation</name>
        <dbReference type="ChEBI" id="CHEBI:24875"/>
    </ligand>
</feature>
<feature type="binding site" evidence="1">
    <location>
        <begin position="136"/>
        <end position="140"/>
    </location>
    <ligand>
        <name>substrate</name>
    </ligand>
</feature>
<feature type="binding site" evidence="1">
    <location>
        <position position="170"/>
    </location>
    <ligand>
        <name>substrate</name>
    </ligand>
</feature>
<feature type="binding site" evidence="1">
    <location>
        <position position="183"/>
    </location>
    <ligand>
        <name>substrate</name>
    </ligand>
</feature>
<feature type="binding site" evidence="1">
    <location>
        <position position="187"/>
    </location>
    <ligand>
        <name>substrate</name>
    </ligand>
</feature>
<feature type="binding site" evidence="1">
    <location>
        <position position="275"/>
    </location>
    <ligand>
        <name>substrate</name>
    </ligand>
</feature>
<feature type="binding site" evidence="1">
    <location>
        <position position="303"/>
    </location>
    <ligand>
        <name>Fe cation</name>
        <dbReference type="ChEBI" id="CHEBI:24875"/>
    </ligand>
</feature>
<sequence length="341" mass="34723">MTTILAIETSCDETGVGIARLDADGAVTLLADEVASSVDEHVRFGGVVPEIASRAHLEALGPTMRRALSAAGVTKPDVVAATIGPGLAGALLVGVAAAKAYSAAWGVPFYAVNHLGGHLAADVYQHGPLPECVALLVSGGHTHLLQVRSLGDPIVELGSTVDDAAGEAYDKVARLLGLGYPGGRVLDELARTGDREAIVFPRGMTGPRDAPYAFSFSGLKTAVARYLESHPDAVNADVAAGFQEAVADVLTRKAVRAATDLGVTTLLIAGGVAANSRLRELAEQRCAAAGLTLRIPRPGLCTDNGAMIASFAAHLVAAGAPPSPLDVPTDPGLPVVKAQVS</sequence>
<evidence type="ECO:0000255" key="1">
    <source>
        <dbReference type="HAMAP-Rule" id="MF_01445"/>
    </source>
</evidence>
<keyword id="KW-0012">Acyltransferase</keyword>
<keyword id="KW-0963">Cytoplasm</keyword>
<keyword id="KW-0408">Iron</keyword>
<keyword id="KW-0479">Metal-binding</keyword>
<keyword id="KW-1185">Reference proteome</keyword>
<keyword id="KW-0808">Transferase</keyword>
<keyword id="KW-0819">tRNA processing</keyword>
<dbReference type="EC" id="2.3.1.234" evidence="1"/>
<dbReference type="EMBL" id="AE016958">
    <property type="protein sequence ID" value="AAS06813.1"/>
    <property type="molecule type" value="Genomic_DNA"/>
</dbReference>
<dbReference type="RefSeq" id="WP_003879516.1">
    <property type="nucleotide sequence ID" value="NZ_CP106873.1"/>
</dbReference>
<dbReference type="SMR" id="Q73S13"/>
<dbReference type="STRING" id="262316.MAP_4263"/>
<dbReference type="KEGG" id="mpa:MAP_4263"/>
<dbReference type="eggNOG" id="COG0533">
    <property type="taxonomic scope" value="Bacteria"/>
</dbReference>
<dbReference type="HOGENOM" id="CLU_023208_0_2_11"/>
<dbReference type="Proteomes" id="UP000000580">
    <property type="component" value="Chromosome"/>
</dbReference>
<dbReference type="GO" id="GO:0005737">
    <property type="term" value="C:cytoplasm"/>
    <property type="evidence" value="ECO:0007669"/>
    <property type="project" value="UniProtKB-SubCell"/>
</dbReference>
<dbReference type="GO" id="GO:0005506">
    <property type="term" value="F:iron ion binding"/>
    <property type="evidence" value="ECO:0007669"/>
    <property type="project" value="UniProtKB-UniRule"/>
</dbReference>
<dbReference type="GO" id="GO:0061711">
    <property type="term" value="F:N(6)-L-threonylcarbamoyladenine synthase activity"/>
    <property type="evidence" value="ECO:0007669"/>
    <property type="project" value="UniProtKB-EC"/>
</dbReference>
<dbReference type="GO" id="GO:0002949">
    <property type="term" value="P:tRNA threonylcarbamoyladenosine modification"/>
    <property type="evidence" value="ECO:0007669"/>
    <property type="project" value="UniProtKB-UniRule"/>
</dbReference>
<dbReference type="CDD" id="cd24133">
    <property type="entry name" value="ASKHA_NBD_TsaD_bac"/>
    <property type="match status" value="1"/>
</dbReference>
<dbReference type="FunFam" id="3.30.420.40:FF:000012">
    <property type="entry name" value="tRNA N6-adenosine threonylcarbamoyltransferase"/>
    <property type="match status" value="1"/>
</dbReference>
<dbReference type="FunFam" id="3.30.420.40:FF:000040">
    <property type="entry name" value="tRNA N6-adenosine threonylcarbamoyltransferase"/>
    <property type="match status" value="1"/>
</dbReference>
<dbReference type="Gene3D" id="3.30.420.40">
    <property type="match status" value="2"/>
</dbReference>
<dbReference type="HAMAP" id="MF_01445">
    <property type="entry name" value="TsaD"/>
    <property type="match status" value="1"/>
</dbReference>
<dbReference type="InterPro" id="IPR043129">
    <property type="entry name" value="ATPase_NBD"/>
</dbReference>
<dbReference type="InterPro" id="IPR000905">
    <property type="entry name" value="Gcp-like_dom"/>
</dbReference>
<dbReference type="InterPro" id="IPR017861">
    <property type="entry name" value="KAE1/TsaD"/>
</dbReference>
<dbReference type="InterPro" id="IPR017860">
    <property type="entry name" value="Peptidase_M22_CS"/>
</dbReference>
<dbReference type="InterPro" id="IPR022450">
    <property type="entry name" value="TsaD"/>
</dbReference>
<dbReference type="NCBIfam" id="TIGR00329">
    <property type="entry name" value="gcp_kae1"/>
    <property type="match status" value="1"/>
</dbReference>
<dbReference type="NCBIfam" id="TIGR03723">
    <property type="entry name" value="T6A_TsaD_YgjD"/>
    <property type="match status" value="1"/>
</dbReference>
<dbReference type="PANTHER" id="PTHR11735">
    <property type="entry name" value="TRNA N6-ADENOSINE THREONYLCARBAMOYLTRANSFERASE"/>
    <property type="match status" value="1"/>
</dbReference>
<dbReference type="PANTHER" id="PTHR11735:SF6">
    <property type="entry name" value="TRNA N6-ADENOSINE THREONYLCARBAMOYLTRANSFERASE, MITOCHONDRIAL"/>
    <property type="match status" value="1"/>
</dbReference>
<dbReference type="Pfam" id="PF00814">
    <property type="entry name" value="TsaD"/>
    <property type="match status" value="1"/>
</dbReference>
<dbReference type="PRINTS" id="PR00789">
    <property type="entry name" value="OSIALOPTASE"/>
</dbReference>
<dbReference type="SUPFAM" id="SSF53067">
    <property type="entry name" value="Actin-like ATPase domain"/>
    <property type="match status" value="2"/>
</dbReference>
<dbReference type="PROSITE" id="PS01016">
    <property type="entry name" value="GLYCOPROTEASE"/>
    <property type="match status" value="1"/>
</dbReference>